<proteinExistence type="inferred from homology"/>
<feature type="chain" id="PRO_0000091765" description="3-hydroxyacyl-[acyl-carrier-protein] dehydratase FabZ">
    <location>
        <begin position="1"/>
        <end position="160"/>
    </location>
</feature>
<feature type="active site" evidence="1">
    <location>
        <position position="63"/>
    </location>
</feature>
<protein>
    <recommendedName>
        <fullName evidence="1">3-hydroxyacyl-[acyl-carrier-protein] dehydratase FabZ</fullName>
        <ecNumber evidence="1">4.2.1.59</ecNumber>
    </recommendedName>
    <alternativeName>
        <fullName evidence="1">(3R)-hydroxymyristoyl-[acyl-carrier-protein] dehydratase</fullName>
        <shortName evidence="1">(3R)-hydroxymyristoyl-ACP dehydrase</shortName>
    </alternativeName>
    <alternativeName>
        <fullName evidence="1">Beta-hydroxyacyl-ACP dehydratase</fullName>
    </alternativeName>
</protein>
<organism>
    <name type="scientific">Xylella fastidiosa (strain 9a5c)</name>
    <dbReference type="NCBI Taxonomy" id="160492"/>
    <lineage>
        <taxon>Bacteria</taxon>
        <taxon>Pseudomonadati</taxon>
        <taxon>Pseudomonadota</taxon>
        <taxon>Gammaproteobacteria</taxon>
        <taxon>Lysobacterales</taxon>
        <taxon>Lysobacteraceae</taxon>
        <taxon>Xylella</taxon>
    </lineage>
</organism>
<comment type="function">
    <text evidence="1">Involved in unsaturated fatty acids biosynthesis. Catalyzes the dehydration of short chain beta-hydroxyacyl-ACPs and long chain saturated and unsaturated beta-hydroxyacyl-ACPs.</text>
</comment>
<comment type="catalytic activity">
    <reaction evidence="1">
        <text>a (3R)-hydroxyacyl-[ACP] = a (2E)-enoyl-[ACP] + H2O</text>
        <dbReference type="Rhea" id="RHEA:13097"/>
        <dbReference type="Rhea" id="RHEA-COMP:9925"/>
        <dbReference type="Rhea" id="RHEA-COMP:9945"/>
        <dbReference type="ChEBI" id="CHEBI:15377"/>
        <dbReference type="ChEBI" id="CHEBI:78784"/>
        <dbReference type="ChEBI" id="CHEBI:78827"/>
        <dbReference type="EC" id="4.2.1.59"/>
    </reaction>
</comment>
<comment type="subcellular location">
    <subcellularLocation>
        <location evidence="1">Cytoplasm</location>
    </subcellularLocation>
</comment>
<comment type="similarity">
    <text evidence="1">Belongs to the thioester dehydratase family. FabZ subfamily.</text>
</comment>
<dbReference type="EC" id="4.2.1.59" evidence="1"/>
<dbReference type="EMBL" id="AE003849">
    <property type="protein sequence ID" value="AAF83854.1"/>
    <property type="molecule type" value="Genomic_DNA"/>
</dbReference>
<dbReference type="PIR" id="C82731">
    <property type="entry name" value="C82731"/>
</dbReference>
<dbReference type="RefSeq" id="WP_010893563.1">
    <property type="nucleotide sequence ID" value="NC_002488.3"/>
</dbReference>
<dbReference type="SMR" id="Q9PEI4"/>
<dbReference type="STRING" id="160492.XF_1044"/>
<dbReference type="KEGG" id="xfa:XF_1044"/>
<dbReference type="eggNOG" id="COG0764">
    <property type="taxonomic scope" value="Bacteria"/>
</dbReference>
<dbReference type="HOGENOM" id="CLU_078912_1_2_6"/>
<dbReference type="Proteomes" id="UP000000812">
    <property type="component" value="Chromosome"/>
</dbReference>
<dbReference type="GO" id="GO:0005737">
    <property type="term" value="C:cytoplasm"/>
    <property type="evidence" value="ECO:0007669"/>
    <property type="project" value="UniProtKB-SubCell"/>
</dbReference>
<dbReference type="GO" id="GO:0016020">
    <property type="term" value="C:membrane"/>
    <property type="evidence" value="ECO:0007669"/>
    <property type="project" value="GOC"/>
</dbReference>
<dbReference type="GO" id="GO:0019171">
    <property type="term" value="F:(3R)-hydroxyacyl-[acyl-carrier-protein] dehydratase activity"/>
    <property type="evidence" value="ECO:0007669"/>
    <property type="project" value="UniProtKB-EC"/>
</dbReference>
<dbReference type="GO" id="GO:0006633">
    <property type="term" value="P:fatty acid biosynthetic process"/>
    <property type="evidence" value="ECO:0007669"/>
    <property type="project" value="UniProtKB-UniRule"/>
</dbReference>
<dbReference type="GO" id="GO:0009245">
    <property type="term" value="P:lipid A biosynthetic process"/>
    <property type="evidence" value="ECO:0007669"/>
    <property type="project" value="UniProtKB-UniRule"/>
</dbReference>
<dbReference type="CDD" id="cd01288">
    <property type="entry name" value="FabZ"/>
    <property type="match status" value="1"/>
</dbReference>
<dbReference type="FunFam" id="3.10.129.10:FF:000001">
    <property type="entry name" value="3-hydroxyacyl-[acyl-carrier-protein] dehydratase FabZ"/>
    <property type="match status" value="1"/>
</dbReference>
<dbReference type="Gene3D" id="3.10.129.10">
    <property type="entry name" value="Hotdog Thioesterase"/>
    <property type="match status" value="1"/>
</dbReference>
<dbReference type="HAMAP" id="MF_00406">
    <property type="entry name" value="FabZ"/>
    <property type="match status" value="1"/>
</dbReference>
<dbReference type="InterPro" id="IPR013114">
    <property type="entry name" value="FabA_FabZ"/>
</dbReference>
<dbReference type="InterPro" id="IPR010084">
    <property type="entry name" value="FabZ"/>
</dbReference>
<dbReference type="InterPro" id="IPR029069">
    <property type="entry name" value="HotDog_dom_sf"/>
</dbReference>
<dbReference type="NCBIfam" id="TIGR01750">
    <property type="entry name" value="fabZ"/>
    <property type="match status" value="1"/>
</dbReference>
<dbReference type="NCBIfam" id="NF000582">
    <property type="entry name" value="PRK00006.1"/>
    <property type="match status" value="1"/>
</dbReference>
<dbReference type="PANTHER" id="PTHR30272">
    <property type="entry name" value="3-HYDROXYACYL-[ACYL-CARRIER-PROTEIN] DEHYDRATASE"/>
    <property type="match status" value="1"/>
</dbReference>
<dbReference type="PANTHER" id="PTHR30272:SF1">
    <property type="entry name" value="3-HYDROXYACYL-[ACYL-CARRIER-PROTEIN] DEHYDRATASE"/>
    <property type="match status" value="1"/>
</dbReference>
<dbReference type="Pfam" id="PF07977">
    <property type="entry name" value="FabA"/>
    <property type="match status" value="1"/>
</dbReference>
<dbReference type="SUPFAM" id="SSF54637">
    <property type="entry name" value="Thioesterase/thiol ester dehydrase-isomerase"/>
    <property type="match status" value="1"/>
</dbReference>
<gene>
    <name evidence="1" type="primary">fabZ</name>
    <name type="ordered locus">XF_1044</name>
</gene>
<keyword id="KW-0963">Cytoplasm</keyword>
<keyword id="KW-0441">Lipid A biosynthesis</keyword>
<keyword id="KW-0444">Lipid biosynthesis</keyword>
<keyword id="KW-0443">Lipid metabolism</keyword>
<keyword id="KW-0456">Lyase</keyword>
<name>FABZ_XYLFA</name>
<evidence type="ECO:0000255" key="1">
    <source>
        <dbReference type="HAMAP-Rule" id="MF_00406"/>
    </source>
</evidence>
<sequence>MSDSPTTAHTRLELPIDIIKIQALLPHRYPFLLVDRILELDQKQKRIVAQKNVSINEPFFQGHFPEHPVMPGVLIIEALAQAGGVMTQLNLSHNGHSSLLFYMVRVDNARFNKQVVPGDILILDMTMKRRIRNMGCYYGEARVNGEVVACADIMCAGVKS</sequence>
<accession>Q9PEI4</accession>
<reference key="1">
    <citation type="journal article" date="2000" name="Nature">
        <title>The genome sequence of the plant pathogen Xylella fastidiosa.</title>
        <authorList>
            <person name="Simpson A.J.G."/>
            <person name="Reinach F.C."/>
            <person name="Arruda P."/>
            <person name="Abreu F.A."/>
            <person name="Acencio M."/>
            <person name="Alvarenga R."/>
            <person name="Alves L.M.C."/>
            <person name="Araya J.E."/>
            <person name="Baia G.S."/>
            <person name="Baptista C.S."/>
            <person name="Barros M.H."/>
            <person name="Bonaccorsi E.D."/>
            <person name="Bordin S."/>
            <person name="Bove J.M."/>
            <person name="Briones M.R.S."/>
            <person name="Bueno M.R.P."/>
            <person name="Camargo A.A."/>
            <person name="Camargo L.E.A."/>
            <person name="Carraro D.M."/>
            <person name="Carrer H."/>
            <person name="Colauto N.B."/>
            <person name="Colombo C."/>
            <person name="Costa F.F."/>
            <person name="Costa M.C.R."/>
            <person name="Costa-Neto C.M."/>
            <person name="Coutinho L.L."/>
            <person name="Cristofani M."/>
            <person name="Dias-Neto E."/>
            <person name="Docena C."/>
            <person name="El-Dorry H."/>
            <person name="Facincani A.P."/>
            <person name="Ferreira A.J.S."/>
            <person name="Ferreira V.C.A."/>
            <person name="Ferro J.A."/>
            <person name="Fraga J.S."/>
            <person name="Franca S.C."/>
            <person name="Franco M.C."/>
            <person name="Frohme M."/>
            <person name="Furlan L.R."/>
            <person name="Garnier M."/>
            <person name="Goldman G.H."/>
            <person name="Goldman M.H.S."/>
            <person name="Gomes S.L."/>
            <person name="Gruber A."/>
            <person name="Ho P.L."/>
            <person name="Hoheisel J.D."/>
            <person name="Junqueira M.L."/>
            <person name="Kemper E.L."/>
            <person name="Kitajima J.P."/>
            <person name="Krieger J.E."/>
            <person name="Kuramae E.E."/>
            <person name="Laigret F."/>
            <person name="Lambais M.R."/>
            <person name="Leite L.C.C."/>
            <person name="Lemos E.G.M."/>
            <person name="Lemos M.V.F."/>
            <person name="Lopes S.A."/>
            <person name="Lopes C.R."/>
            <person name="Machado J.A."/>
            <person name="Machado M.A."/>
            <person name="Madeira A.M.B.N."/>
            <person name="Madeira H.M.F."/>
            <person name="Marino C.L."/>
            <person name="Marques M.V."/>
            <person name="Martins E.A.L."/>
            <person name="Martins E.M.F."/>
            <person name="Matsukuma A.Y."/>
            <person name="Menck C.F.M."/>
            <person name="Miracca E.C."/>
            <person name="Miyaki C.Y."/>
            <person name="Monteiro-Vitorello C.B."/>
            <person name="Moon D.H."/>
            <person name="Nagai M.A."/>
            <person name="Nascimento A.L.T.O."/>
            <person name="Netto L.E.S."/>
            <person name="Nhani A. Jr."/>
            <person name="Nobrega F.G."/>
            <person name="Nunes L.R."/>
            <person name="Oliveira M.A."/>
            <person name="de Oliveira M.C."/>
            <person name="de Oliveira R.C."/>
            <person name="Palmieri D.A."/>
            <person name="Paris A."/>
            <person name="Peixoto B.R."/>
            <person name="Pereira G.A.G."/>
            <person name="Pereira H.A. Jr."/>
            <person name="Pesquero J.B."/>
            <person name="Quaggio R.B."/>
            <person name="Roberto P.G."/>
            <person name="Rodrigues V."/>
            <person name="de Rosa A.J.M."/>
            <person name="de Rosa V.E. Jr."/>
            <person name="de Sa R.G."/>
            <person name="Santelli R.V."/>
            <person name="Sawasaki H.E."/>
            <person name="da Silva A.C.R."/>
            <person name="da Silva A.M."/>
            <person name="da Silva F.R."/>
            <person name="Silva W.A. Jr."/>
            <person name="da Silveira J.F."/>
            <person name="Silvestri M.L.Z."/>
            <person name="Siqueira W.J."/>
            <person name="de Souza A.A."/>
            <person name="de Souza A.P."/>
            <person name="Terenzi M.F."/>
            <person name="Truffi D."/>
            <person name="Tsai S.M."/>
            <person name="Tsuhako M.H."/>
            <person name="Vallada H."/>
            <person name="Van Sluys M.A."/>
            <person name="Verjovski-Almeida S."/>
            <person name="Vettore A.L."/>
            <person name="Zago M.A."/>
            <person name="Zatz M."/>
            <person name="Meidanis J."/>
            <person name="Setubal J.C."/>
        </authorList>
    </citation>
    <scope>NUCLEOTIDE SEQUENCE [LARGE SCALE GENOMIC DNA]</scope>
    <source>
        <strain>9a5c</strain>
    </source>
</reference>